<gene>
    <name evidence="3" type="primary">ERD2</name>
    <name evidence="7" type="ORF">EHI_170470</name>
</gene>
<name>ERD2_ENTH1</name>
<evidence type="ECO:0000250" key="1">
    <source>
        <dbReference type="UniProtKB" id="P18414"/>
    </source>
</evidence>
<evidence type="ECO:0000255" key="2"/>
<evidence type="ECO:0000303" key="3">
    <source>
    </source>
</evidence>
<evidence type="ECO:0000305" key="4"/>
<evidence type="ECO:0000312" key="5">
    <source>
        <dbReference type="EMBL" id="CAA05206.1"/>
    </source>
</evidence>
<evidence type="ECO:0000312" key="6">
    <source>
        <dbReference type="EMBL" id="CAC34303.1"/>
    </source>
</evidence>
<evidence type="ECO:0000312" key="7">
    <source>
        <dbReference type="EMBL" id="EAL45641.1"/>
    </source>
</evidence>
<organism evidence="7">
    <name type="scientific">Entamoeba histolytica (strain ATCC 30459 / HM-1:IMSS / ABRM)</name>
    <dbReference type="NCBI Taxonomy" id="294381"/>
    <lineage>
        <taxon>Eukaryota</taxon>
        <taxon>Amoebozoa</taxon>
        <taxon>Evosea</taxon>
        <taxon>Archamoebae</taxon>
        <taxon>Mastigamoebida</taxon>
        <taxon>Entamoebidae</taxon>
        <taxon>Entamoeba</taxon>
    </lineage>
</organism>
<dbReference type="EMBL" id="AJ002138">
    <property type="protein sequence ID" value="CAA05206.1"/>
    <property type="molecule type" value="Genomic_DNA"/>
</dbReference>
<dbReference type="EMBL" id="AJ311623">
    <property type="protein sequence ID" value="CAC34303.1"/>
    <property type="molecule type" value="Genomic_DNA"/>
</dbReference>
<dbReference type="EMBL" id="DS571331">
    <property type="protein sequence ID" value="EAL45641.1"/>
    <property type="molecule type" value="Genomic_DNA"/>
</dbReference>
<dbReference type="RefSeq" id="XP_651027.1">
    <property type="nucleotide sequence ID" value="XM_645935.1"/>
</dbReference>
<dbReference type="SMR" id="O44017"/>
<dbReference type="STRING" id="5759.C4M7K4"/>
<dbReference type="EnsemblProtists" id="GAT97522">
    <property type="protein sequence ID" value="GAT97522"/>
    <property type="gene ID" value="CL6EHI_170470"/>
</dbReference>
<dbReference type="EnsemblProtists" id="rna_EHI_170470-1">
    <property type="protein sequence ID" value="rna_EHI_170470-1"/>
    <property type="gene ID" value="EHI_170470"/>
</dbReference>
<dbReference type="GeneID" id="3405331"/>
<dbReference type="KEGG" id="ehi:EHI_170470"/>
<dbReference type="VEuPathDB" id="AmoebaDB:EHI5A_023770"/>
<dbReference type="VEuPathDB" id="AmoebaDB:EHI7A_011190"/>
<dbReference type="VEuPathDB" id="AmoebaDB:EHI8A_008740"/>
<dbReference type="VEuPathDB" id="AmoebaDB:EHI_170470"/>
<dbReference type="VEuPathDB" id="AmoebaDB:KM1_026690"/>
<dbReference type="eggNOG" id="KOG3106">
    <property type="taxonomic scope" value="Eukaryota"/>
</dbReference>
<dbReference type="HOGENOM" id="CLU_057784_0_0_1"/>
<dbReference type="OMA" id="WKSRSCE"/>
<dbReference type="OrthoDB" id="7694678at2759"/>
<dbReference type="Proteomes" id="UP000001926">
    <property type="component" value="Partially assembled WGS sequence"/>
</dbReference>
<dbReference type="GO" id="GO:0005801">
    <property type="term" value="C:cis-Golgi network"/>
    <property type="evidence" value="ECO:0000318"/>
    <property type="project" value="GO_Central"/>
</dbReference>
<dbReference type="GO" id="GO:0005783">
    <property type="term" value="C:endoplasmic reticulum"/>
    <property type="evidence" value="ECO:0000318"/>
    <property type="project" value="GO_Central"/>
</dbReference>
<dbReference type="GO" id="GO:0005789">
    <property type="term" value="C:endoplasmic reticulum membrane"/>
    <property type="evidence" value="ECO:0007669"/>
    <property type="project" value="UniProtKB-SubCell"/>
</dbReference>
<dbReference type="GO" id="GO:0046923">
    <property type="term" value="F:ER retention sequence binding"/>
    <property type="evidence" value="ECO:0000318"/>
    <property type="project" value="GO_Central"/>
</dbReference>
<dbReference type="GO" id="GO:0006621">
    <property type="term" value="P:protein retention in ER lumen"/>
    <property type="evidence" value="ECO:0000318"/>
    <property type="project" value="GO_Central"/>
</dbReference>
<dbReference type="GO" id="GO:0015031">
    <property type="term" value="P:protein transport"/>
    <property type="evidence" value="ECO:0007669"/>
    <property type="project" value="UniProtKB-KW"/>
</dbReference>
<dbReference type="GO" id="GO:0016192">
    <property type="term" value="P:vesicle-mediated transport"/>
    <property type="evidence" value="ECO:0007669"/>
    <property type="project" value="UniProtKB-KW"/>
</dbReference>
<dbReference type="InterPro" id="IPR000133">
    <property type="entry name" value="ER_ret_rcpt"/>
</dbReference>
<dbReference type="PANTHER" id="PTHR10585">
    <property type="entry name" value="ER LUMEN PROTEIN RETAINING RECEPTOR"/>
    <property type="match status" value="1"/>
</dbReference>
<dbReference type="Pfam" id="PF00810">
    <property type="entry name" value="ER_lumen_recept"/>
    <property type="match status" value="1"/>
</dbReference>
<dbReference type="PRINTS" id="PR00660">
    <property type="entry name" value="ERLUMENR"/>
</dbReference>
<dbReference type="PROSITE" id="PS00951">
    <property type="entry name" value="ER_LUMEN_RECEPTOR_1"/>
    <property type="match status" value="1"/>
</dbReference>
<dbReference type="PROSITE" id="PS00952">
    <property type="entry name" value="ER_LUMEN_RECEPTOR_2"/>
    <property type="match status" value="1"/>
</dbReference>
<sequence>MVFNLFRISADLVHLLSIYFLLTKIISHKNCIGISLRSQILFFIVWVTRYLDIFYNFYSLYNTILKIVYLTTSAYTIYLISKRFRATYDKIHDTLNVWYLIVPCIVLAFIFTEDYSITEICWTFSIFLEAVAILPQILLLRSTGEVENLNSQYIFCLGLYRALYIINWIYRYATEQSYWSPLTWICGSIQTLLYVEYFYYYIKSRVEGTKFVLP</sequence>
<proteinExistence type="inferred from homology"/>
<comment type="function">
    <text evidence="1">Required for the retention of luminal endoplasmic reticulum proteins. Determines the specificity of the luminal ER protein retention system. Also required for normal vesicular traffic through the Golgi.</text>
</comment>
<comment type="subcellular location">
    <subcellularLocation>
        <location evidence="1">Endoplasmic reticulum membrane</location>
        <topology evidence="2">Multi-pass membrane protein</topology>
    </subcellularLocation>
</comment>
<comment type="similarity">
    <text evidence="4">Belongs to the ERD2 family.</text>
</comment>
<accession>O44017</accession>
<accession>A0A175JVL5</accession>
<accession>C4M7K4</accession>
<accession>Q7K9G5</accession>
<keyword id="KW-0256">Endoplasmic reticulum</keyword>
<keyword id="KW-0931">ER-Golgi transport</keyword>
<keyword id="KW-0472">Membrane</keyword>
<keyword id="KW-0653">Protein transport</keyword>
<keyword id="KW-0675">Receptor</keyword>
<keyword id="KW-1185">Reference proteome</keyword>
<keyword id="KW-0812">Transmembrane</keyword>
<keyword id="KW-1133">Transmembrane helix</keyword>
<keyword id="KW-0813">Transport</keyword>
<feature type="chain" id="PRO_0000194164" description="ER lumen protein-retaining receptor">
    <location>
        <begin position="1"/>
        <end position="214"/>
    </location>
</feature>
<feature type="topological domain" description="Lumenal" evidence="2">
    <location>
        <begin position="1"/>
        <end position="4"/>
    </location>
</feature>
<feature type="transmembrane region" description="Helical" evidence="2">
    <location>
        <begin position="5"/>
        <end position="23"/>
    </location>
</feature>
<feature type="topological domain" description="Cytoplasmic" evidence="2">
    <location>
        <begin position="24"/>
        <end position="37"/>
    </location>
</feature>
<feature type="transmembrane region" description="Helical" evidence="2">
    <location>
        <begin position="38"/>
        <end position="55"/>
    </location>
</feature>
<feature type="topological domain" description="Lumenal" evidence="2">
    <location>
        <begin position="56"/>
        <end position="63"/>
    </location>
</feature>
<feature type="transmembrane region" description="Helical" evidence="2">
    <location>
        <begin position="64"/>
        <end position="82"/>
    </location>
</feature>
<feature type="topological domain" description="Cytoplasmic" evidence="2">
    <location>
        <begin position="83"/>
        <end position="98"/>
    </location>
</feature>
<feature type="transmembrane region" description="Helical" evidence="2">
    <location>
        <begin position="99"/>
        <end position="112"/>
    </location>
</feature>
<feature type="topological domain" description="Lumenal" evidence="2">
    <location>
        <begin position="113"/>
        <end position="119"/>
    </location>
</feature>
<feature type="transmembrane region" description="Helical" evidence="2">
    <location>
        <begin position="120"/>
        <end position="139"/>
    </location>
</feature>
<feature type="topological domain" description="Cytoplasmic" evidence="2">
    <location>
        <begin position="140"/>
        <end position="151"/>
    </location>
</feature>
<feature type="transmembrane region" description="Helical" evidence="2">
    <location>
        <begin position="152"/>
        <end position="170"/>
    </location>
</feature>
<feature type="topological domain" description="Lumenal" evidence="2">
    <location>
        <begin position="171"/>
        <end position="181"/>
    </location>
</feature>
<feature type="transmembrane region" description="Helical" evidence="2">
    <location>
        <begin position="182"/>
        <end position="202"/>
    </location>
</feature>
<feature type="topological domain" description="Cytoplasmic" evidence="2">
    <location>
        <begin position="203"/>
        <end position="214"/>
    </location>
</feature>
<feature type="sequence conflict" description="In Ref. 1; CAA05206 and 2; CAC34303." evidence="4" ref="1 2">
    <original>P</original>
    <variation>PY</variation>
    <location>
        <position position="214"/>
    </location>
</feature>
<reference evidence="5" key="1">
    <citation type="journal article" date="1998" name="Mol. Biochem. Parasitol.">
        <title>Cloning and expression of the Entamoeba histolytica ERD2 gene.</title>
        <authorList>
            <person name="Sanchez-Lopez R."/>
            <person name="Gama-Castro S."/>
            <person name="Ramos M.A."/>
            <person name="Merino E."/>
            <person name="Lizardi P.M."/>
            <person name="Alagon A."/>
        </authorList>
    </citation>
    <scope>NUCLEOTIDE SEQUENCE [GENOMIC DNA]</scope>
    <source>
        <strain evidence="5">HK-9</strain>
    </source>
</reference>
<reference evidence="6" key="2">
    <citation type="journal article" date="2001" name="Protist">
        <title>Introns of Entamoeba histolytica and Entamoeba dispar.</title>
        <authorList>
            <person name="Willhoeft U."/>
            <person name="Campos-Gongora E."/>
            <person name="Touzni S."/>
            <person name="Bruchhaus I."/>
            <person name="Tannich E."/>
        </authorList>
    </citation>
    <scope>NUCLEOTIDE SEQUENCE [GENOMIC DNA]</scope>
    <source>
        <strain evidence="6">ATCC 30459 / HM-1:IMSS / ABRM</strain>
    </source>
</reference>
<reference evidence="7" key="3">
    <citation type="journal article" date="2005" name="Nature">
        <title>The genome of the protist parasite Entamoeba histolytica.</title>
        <authorList>
            <person name="Loftus B.J."/>
            <person name="Anderson I."/>
            <person name="Davies R."/>
            <person name="Alsmark U.C."/>
            <person name="Samuelson J."/>
            <person name="Amedeo P."/>
            <person name="Roncaglia P."/>
            <person name="Berriman M."/>
            <person name="Hirt R.P."/>
            <person name="Mann B.J."/>
            <person name="Nozaki T."/>
            <person name="Suh B."/>
            <person name="Pop M."/>
            <person name="Duchene M."/>
            <person name="Ackers J."/>
            <person name="Tannich E."/>
            <person name="Leippe M."/>
            <person name="Hofer M."/>
            <person name="Bruchhaus I."/>
            <person name="Willhoeft U."/>
            <person name="Bhattacharya A."/>
            <person name="Chillingworth T."/>
            <person name="Churcher C.M."/>
            <person name="Hance Z."/>
            <person name="Harris B."/>
            <person name="Harris D."/>
            <person name="Jagels K."/>
            <person name="Moule S."/>
            <person name="Mungall K.L."/>
            <person name="Ormond D."/>
            <person name="Squares R."/>
            <person name="Whitehead S."/>
            <person name="Quail M.A."/>
            <person name="Rabbinowitsch E."/>
            <person name="Norbertczak H."/>
            <person name="Price C."/>
            <person name="Wang Z."/>
            <person name="Guillen N."/>
            <person name="Gilchrist C."/>
            <person name="Stroup S.E."/>
            <person name="Bhattacharya S."/>
            <person name="Lohia A."/>
            <person name="Foster P.G."/>
            <person name="Sicheritz-Ponten T."/>
            <person name="Weber C."/>
            <person name="Singh U."/>
            <person name="Mukherjee C."/>
            <person name="El-Sayed N.M.A."/>
            <person name="Petri W.A."/>
            <person name="Clark C.G."/>
            <person name="Embley T.M."/>
            <person name="Barrell B.G."/>
            <person name="Fraser C.M."/>
            <person name="Hall N."/>
        </authorList>
    </citation>
    <scope>NUCLEOTIDE SEQUENCE [LARGE SCALE GENOMIC DNA]</scope>
    <source>
        <strain evidence="7">ATCC 30459 / HM-1:IMSS / ABRM</strain>
    </source>
</reference>
<protein>
    <recommendedName>
        <fullName>ER lumen protein-retaining receptor</fullName>
    </recommendedName>
</protein>